<feature type="chain" id="PRO_0000120629" description="NAD kinase 2">
    <location>
        <begin position="1"/>
        <end position="267"/>
    </location>
</feature>
<feature type="active site" description="Proton acceptor" evidence="1">
    <location>
        <position position="50"/>
    </location>
</feature>
<feature type="binding site" evidence="1">
    <location>
        <begin position="50"/>
        <end position="51"/>
    </location>
    <ligand>
        <name>NAD(+)</name>
        <dbReference type="ChEBI" id="CHEBI:57540"/>
    </ligand>
</feature>
<feature type="binding site" evidence="1">
    <location>
        <position position="55"/>
    </location>
    <ligand>
        <name>NAD(+)</name>
        <dbReference type="ChEBI" id="CHEBI:57540"/>
    </ligand>
</feature>
<feature type="binding site" evidence="1">
    <location>
        <begin position="122"/>
        <end position="123"/>
    </location>
    <ligand>
        <name>NAD(+)</name>
        <dbReference type="ChEBI" id="CHEBI:57540"/>
    </ligand>
</feature>
<feature type="binding site" evidence="1">
    <location>
        <position position="149"/>
    </location>
    <ligand>
        <name>NAD(+)</name>
        <dbReference type="ChEBI" id="CHEBI:57540"/>
    </ligand>
</feature>
<feature type="binding site" evidence="1">
    <location>
        <position position="151"/>
    </location>
    <ligand>
        <name>NAD(+)</name>
        <dbReference type="ChEBI" id="CHEBI:57540"/>
    </ligand>
</feature>
<feature type="binding site" evidence="1">
    <location>
        <begin position="162"/>
        <end position="167"/>
    </location>
    <ligand>
        <name>NAD(+)</name>
        <dbReference type="ChEBI" id="CHEBI:57540"/>
    </ligand>
</feature>
<feature type="binding site" evidence="1">
    <location>
        <position position="186"/>
    </location>
    <ligand>
        <name>NAD(+)</name>
        <dbReference type="ChEBI" id="CHEBI:57540"/>
    </ligand>
</feature>
<sequence length="267" mass="30499">MAKTIFYFSYRKTEELHAKAKELKKITTDYGYELTDDYQKANVIISIGGDGAFLKSVRETGFRQDCLYAGIALTEQLGQYCDFHINQLDEIIKAAIEDRWLVRRYPTIYGTVNNTKAFYVLNEFNIRSSIIRTLTMDLYINDSHFETFRGDGMVISTPTGSTAYNKSVNGSIVDPLLPSMQVSELASINNNKFRTLGSSFILSPKRKLRIEIASEEGNNEFPMIGMDSEALSIQHVHEVNLEVGDRFINIIKLPKNSFWDKVKRNFL</sequence>
<gene>
    <name evidence="1" type="primary">nadK2</name>
    <name type="ordered locus">lin1628</name>
</gene>
<dbReference type="EC" id="2.7.1.23" evidence="1"/>
<dbReference type="EMBL" id="AL596169">
    <property type="protein sequence ID" value="CAC96859.1"/>
    <property type="molecule type" value="Genomic_DNA"/>
</dbReference>
<dbReference type="PIR" id="AC1636">
    <property type="entry name" value="AC1636"/>
</dbReference>
<dbReference type="RefSeq" id="WP_003723315.1">
    <property type="nucleotide sequence ID" value="NC_003212.1"/>
</dbReference>
<dbReference type="SMR" id="P65771"/>
<dbReference type="STRING" id="272626.gene:17565959"/>
<dbReference type="KEGG" id="lin:lin1628"/>
<dbReference type="eggNOG" id="COG0061">
    <property type="taxonomic scope" value="Bacteria"/>
</dbReference>
<dbReference type="HOGENOM" id="CLU_008831_0_3_9"/>
<dbReference type="OrthoDB" id="9774737at2"/>
<dbReference type="Proteomes" id="UP000002513">
    <property type="component" value="Chromosome"/>
</dbReference>
<dbReference type="GO" id="GO:0005737">
    <property type="term" value="C:cytoplasm"/>
    <property type="evidence" value="ECO:0007669"/>
    <property type="project" value="UniProtKB-SubCell"/>
</dbReference>
<dbReference type="GO" id="GO:0005524">
    <property type="term" value="F:ATP binding"/>
    <property type="evidence" value="ECO:0007669"/>
    <property type="project" value="UniProtKB-KW"/>
</dbReference>
<dbReference type="GO" id="GO:0046872">
    <property type="term" value="F:metal ion binding"/>
    <property type="evidence" value="ECO:0007669"/>
    <property type="project" value="UniProtKB-UniRule"/>
</dbReference>
<dbReference type="GO" id="GO:0051287">
    <property type="term" value="F:NAD binding"/>
    <property type="evidence" value="ECO:0007669"/>
    <property type="project" value="UniProtKB-ARBA"/>
</dbReference>
<dbReference type="GO" id="GO:0003951">
    <property type="term" value="F:NAD+ kinase activity"/>
    <property type="evidence" value="ECO:0007669"/>
    <property type="project" value="UniProtKB-UniRule"/>
</dbReference>
<dbReference type="GO" id="GO:0019674">
    <property type="term" value="P:NAD metabolic process"/>
    <property type="evidence" value="ECO:0007669"/>
    <property type="project" value="InterPro"/>
</dbReference>
<dbReference type="GO" id="GO:0006741">
    <property type="term" value="P:NADP biosynthetic process"/>
    <property type="evidence" value="ECO:0007669"/>
    <property type="project" value="UniProtKB-UniRule"/>
</dbReference>
<dbReference type="Gene3D" id="3.40.50.10330">
    <property type="entry name" value="Probable inorganic polyphosphate/atp-NAD kinase, domain 1"/>
    <property type="match status" value="1"/>
</dbReference>
<dbReference type="Gene3D" id="2.60.200.30">
    <property type="entry name" value="Probable inorganic polyphosphate/atp-NAD kinase, domain 2"/>
    <property type="match status" value="1"/>
</dbReference>
<dbReference type="HAMAP" id="MF_00361">
    <property type="entry name" value="NAD_kinase"/>
    <property type="match status" value="1"/>
</dbReference>
<dbReference type="InterPro" id="IPR017438">
    <property type="entry name" value="ATP-NAD_kinase_N"/>
</dbReference>
<dbReference type="InterPro" id="IPR017437">
    <property type="entry name" value="ATP-NAD_kinase_PpnK-typ_C"/>
</dbReference>
<dbReference type="InterPro" id="IPR016064">
    <property type="entry name" value="NAD/diacylglycerol_kinase_sf"/>
</dbReference>
<dbReference type="InterPro" id="IPR002504">
    <property type="entry name" value="NADK"/>
</dbReference>
<dbReference type="NCBIfam" id="NF002902">
    <property type="entry name" value="PRK03501.1"/>
    <property type="match status" value="1"/>
</dbReference>
<dbReference type="PANTHER" id="PTHR20275">
    <property type="entry name" value="NAD KINASE"/>
    <property type="match status" value="1"/>
</dbReference>
<dbReference type="PANTHER" id="PTHR20275:SF9">
    <property type="entry name" value="NAD KINASE 2"/>
    <property type="match status" value="1"/>
</dbReference>
<dbReference type="Pfam" id="PF20143">
    <property type="entry name" value="NAD_kinase_C"/>
    <property type="match status" value="1"/>
</dbReference>
<dbReference type="SUPFAM" id="SSF111331">
    <property type="entry name" value="NAD kinase/diacylglycerol kinase-like"/>
    <property type="match status" value="1"/>
</dbReference>
<organism>
    <name type="scientific">Listeria innocua serovar 6a (strain ATCC BAA-680 / CLIP 11262)</name>
    <dbReference type="NCBI Taxonomy" id="272626"/>
    <lineage>
        <taxon>Bacteria</taxon>
        <taxon>Bacillati</taxon>
        <taxon>Bacillota</taxon>
        <taxon>Bacilli</taxon>
        <taxon>Bacillales</taxon>
        <taxon>Listeriaceae</taxon>
        <taxon>Listeria</taxon>
    </lineage>
</organism>
<evidence type="ECO:0000255" key="1">
    <source>
        <dbReference type="HAMAP-Rule" id="MF_00361"/>
    </source>
</evidence>
<protein>
    <recommendedName>
        <fullName evidence="1">NAD kinase 2</fullName>
        <ecNumber evidence="1">2.7.1.23</ecNumber>
    </recommendedName>
    <alternativeName>
        <fullName evidence="1">ATP-dependent NAD kinase 2</fullName>
    </alternativeName>
</protein>
<accession>P65771</accession>
<accession>Q92BC2</accession>
<proteinExistence type="inferred from homology"/>
<name>NADK2_LISIN</name>
<keyword id="KW-0067">ATP-binding</keyword>
<keyword id="KW-0963">Cytoplasm</keyword>
<keyword id="KW-0418">Kinase</keyword>
<keyword id="KW-0520">NAD</keyword>
<keyword id="KW-0521">NADP</keyword>
<keyword id="KW-0547">Nucleotide-binding</keyword>
<keyword id="KW-0808">Transferase</keyword>
<comment type="function">
    <text evidence="1">Involved in the regulation of the intracellular balance of NAD and NADP, and is a key enzyme in the biosynthesis of NADP. Catalyzes specifically the phosphorylation on 2'-hydroxyl of the adenosine moiety of NAD to yield NADP.</text>
</comment>
<comment type="catalytic activity">
    <reaction evidence="1">
        <text>NAD(+) + ATP = ADP + NADP(+) + H(+)</text>
        <dbReference type="Rhea" id="RHEA:18629"/>
        <dbReference type="ChEBI" id="CHEBI:15378"/>
        <dbReference type="ChEBI" id="CHEBI:30616"/>
        <dbReference type="ChEBI" id="CHEBI:57540"/>
        <dbReference type="ChEBI" id="CHEBI:58349"/>
        <dbReference type="ChEBI" id="CHEBI:456216"/>
        <dbReference type="EC" id="2.7.1.23"/>
    </reaction>
</comment>
<comment type="cofactor">
    <cofactor evidence="1">
        <name>a divalent metal cation</name>
        <dbReference type="ChEBI" id="CHEBI:60240"/>
    </cofactor>
</comment>
<comment type="subcellular location">
    <subcellularLocation>
        <location evidence="1">Cytoplasm</location>
    </subcellularLocation>
</comment>
<comment type="similarity">
    <text evidence="1">Belongs to the NAD kinase family.</text>
</comment>
<reference key="1">
    <citation type="journal article" date="2001" name="Science">
        <title>Comparative genomics of Listeria species.</title>
        <authorList>
            <person name="Glaser P."/>
            <person name="Frangeul L."/>
            <person name="Buchrieser C."/>
            <person name="Rusniok C."/>
            <person name="Amend A."/>
            <person name="Baquero F."/>
            <person name="Berche P."/>
            <person name="Bloecker H."/>
            <person name="Brandt P."/>
            <person name="Chakraborty T."/>
            <person name="Charbit A."/>
            <person name="Chetouani F."/>
            <person name="Couve E."/>
            <person name="de Daruvar A."/>
            <person name="Dehoux P."/>
            <person name="Domann E."/>
            <person name="Dominguez-Bernal G."/>
            <person name="Duchaud E."/>
            <person name="Durant L."/>
            <person name="Dussurget O."/>
            <person name="Entian K.-D."/>
            <person name="Fsihi H."/>
            <person name="Garcia-del Portillo F."/>
            <person name="Garrido P."/>
            <person name="Gautier L."/>
            <person name="Goebel W."/>
            <person name="Gomez-Lopez N."/>
            <person name="Hain T."/>
            <person name="Hauf J."/>
            <person name="Jackson D."/>
            <person name="Jones L.-M."/>
            <person name="Kaerst U."/>
            <person name="Kreft J."/>
            <person name="Kuhn M."/>
            <person name="Kunst F."/>
            <person name="Kurapkat G."/>
            <person name="Madueno E."/>
            <person name="Maitournam A."/>
            <person name="Mata Vicente J."/>
            <person name="Ng E."/>
            <person name="Nedjari H."/>
            <person name="Nordsiek G."/>
            <person name="Novella S."/>
            <person name="de Pablos B."/>
            <person name="Perez-Diaz J.-C."/>
            <person name="Purcell R."/>
            <person name="Remmel B."/>
            <person name="Rose M."/>
            <person name="Schlueter T."/>
            <person name="Simoes N."/>
            <person name="Tierrez A."/>
            <person name="Vazquez-Boland J.-A."/>
            <person name="Voss H."/>
            <person name="Wehland J."/>
            <person name="Cossart P."/>
        </authorList>
    </citation>
    <scope>NUCLEOTIDE SEQUENCE [LARGE SCALE GENOMIC DNA]</scope>
    <source>
        <strain>ATCC BAA-680 / CLIP 11262</strain>
    </source>
</reference>